<reference key="1">
    <citation type="journal article" date="2004" name="Nat. Genet.">
        <title>Complete sequencing and characterization of 21,243 full-length human cDNAs.</title>
        <authorList>
            <person name="Ota T."/>
            <person name="Suzuki Y."/>
            <person name="Nishikawa T."/>
            <person name="Otsuki T."/>
            <person name="Sugiyama T."/>
            <person name="Irie R."/>
            <person name="Wakamatsu A."/>
            <person name="Hayashi K."/>
            <person name="Sato H."/>
            <person name="Nagai K."/>
            <person name="Kimura K."/>
            <person name="Makita H."/>
            <person name="Sekine M."/>
            <person name="Obayashi M."/>
            <person name="Nishi T."/>
            <person name="Shibahara T."/>
            <person name="Tanaka T."/>
            <person name="Ishii S."/>
            <person name="Yamamoto J."/>
            <person name="Saito K."/>
            <person name="Kawai Y."/>
            <person name="Isono Y."/>
            <person name="Nakamura Y."/>
            <person name="Nagahari K."/>
            <person name="Murakami K."/>
            <person name="Yasuda T."/>
            <person name="Iwayanagi T."/>
            <person name="Wagatsuma M."/>
            <person name="Shiratori A."/>
            <person name="Sudo H."/>
            <person name="Hosoiri T."/>
            <person name="Kaku Y."/>
            <person name="Kodaira H."/>
            <person name="Kondo H."/>
            <person name="Sugawara M."/>
            <person name="Takahashi M."/>
            <person name="Kanda K."/>
            <person name="Yokoi T."/>
            <person name="Furuya T."/>
            <person name="Kikkawa E."/>
            <person name="Omura Y."/>
            <person name="Abe K."/>
            <person name="Kamihara K."/>
            <person name="Katsuta N."/>
            <person name="Sato K."/>
            <person name="Tanikawa M."/>
            <person name="Yamazaki M."/>
            <person name="Ninomiya K."/>
            <person name="Ishibashi T."/>
            <person name="Yamashita H."/>
            <person name="Murakawa K."/>
            <person name="Fujimori K."/>
            <person name="Tanai H."/>
            <person name="Kimata M."/>
            <person name="Watanabe M."/>
            <person name="Hiraoka S."/>
            <person name="Chiba Y."/>
            <person name="Ishida S."/>
            <person name="Ono Y."/>
            <person name="Takiguchi S."/>
            <person name="Watanabe S."/>
            <person name="Yosida M."/>
            <person name="Hotuta T."/>
            <person name="Kusano J."/>
            <person name="Kanehori K."/>
            <person name="Takahashi-Fujii A."/>
            <person name="Hara H."/>
            <person name="Tanase T.-O."/>
            <person name="Nomura Y."/>
            <person name="Togiya S."/>
            <person name="Komai F."/>
            <person name="Hara R."/>
            <person name="Takeuchi K."/>
            <person name="Arita M."/>
            <person name="Imose N."/>
            <person name="Musashino K."/>
            <person name="Yuuki H."/>
            <person name="Oshima A."/>
            <person name="Sasaki N."/>
            <person name="Aotsuka S."/>
            <person name="Yoshikawa Y."/>
            <person name="Matsunawa H."/>
            <person name="Ichihara T."/>
            <person name="Shiohata N."/>
            <person name="Sano S."/>
            <person name="Moriya S."/>
            <person name="Momiyama H."/>
            <person name="Satoh N."/>
            <person name="Takami S."/>
            <person name="Terashima Y."/>
            <person name="Suzuki O."/>
            <person name="Nakagawa S."/>
            <person name="Senoh A."/>
            <person name="Mizoguchi H."/>
            <person name="Goto Y."/>
            <person name="Shimizu F."/>
            <person name="Wakebe H."/>
            <person name="Hishigaki H."/>
            <person name="Watanabe T."/>
            <person name="Sugiyama A."/>
            <person name="Takemoto M."/>
            <person name="Kawakami B."/>
            <person name="Yamazaki M."/>
            <person name="Watanabe K."/>
            <person name="Kumagai A."/>
            <person name="Itakura S."/>
            <person name="Fukuzumi Y."/>
            <person name="Fujimori Y."/>
            <person name="Komiyama M."/>
            <person name="Tashiro H."/>
            <person name="Tanigami A."/>
            <person name="Fujiwara T."/>
            <person name="Ono T."/>
            <person name="Yamada K."/>
            <person name="Fujii Y."/>
            <person name="Ozaki K."/>
            <person name="Hirao M."/>
            <person name="Ohmori Y."/>
            <person name="Kawabata A."/>
            <person name="Hikiji T."/>
            <person name="Kobatake N."/>
            <person name="Inagaki H."/>
            <person name="Ikema Y."/>
            <person name="Okamoto S."/>
            <person name="Okitani R."/>
            <person name="Kawakami T."/>
            <person name="Noguchi S."/>
            <person name="Itoh T."/>
            <person name="Shigeta K."/>
            <person name="Senba T."/>
            <person name="Matsumura K."/>
            <person name="Nakajima Y."/>
            <person name="Mizuno T."/>
            <person name="Morinaga M."/>
            <person name="Sasaki M."/>
            <person name="Togashi T."/>
            <person name="Oyama M."/>
            <person name="Hata H."/>
            <person name="Watanabe M."/>
            <person name="Komatsu T."/>
            <person name="Mizushima-Sugano J."/>
            <person name="Satoh T."/>
            <person name="Shirai Y."/>
            <person name="Takahashi Y."/>
            <person name="Nakagawa K."/>
            <person name="Okumura K."/>
            <person name="Nagase T."/>
            <person name="Nomura N."/>
            <person name="Kikuchi H."/>
            <person name="Masuho Y."/>
            <person name="Yamashita R."/>
            <person name="Nakai K."/>
            <person name="Yada T."/>
            <person name="Nakamura Y."/>
            <person name="Ohara O."/>
            <person name="Isogai T."/>
            <person name="Sugano S."/>
        </authorList>
    </citation>
    <scope>NUCLEOTIDE SEQUENCE [LARGE SCALE MRNA]</scope>
    <source>
        <tissue>Testis</tissue>
    </source>
</reference>
<evidence type="ECO:0000256" key="1">
    <source>
        <dbReference type="SAM" id="MobiDB-lite"/>
    </source>
</evidence>
<evidence type="ECO:0000305" key="2"/>
<sequence>MRAPAQVRTLRWSLGWPGSRGRDVFAALRCAQALRCQPLGSALPPQAPTRDLGRPQAFDSSRTPGPRPPRSTLRMMETKSPTSPSYGARGKVPPGAGPGSPLSRGAGQGAPLSETRFHHVAQAFLKLLSSSNPPTSASESARIIGVSHCTQPQVASLSDRHCSKVNHTVLSPRKGVPLQLTAAHSSSQEVLATVPFHG</sequence>
<proteinExistence type="uncertain"/>
<accession>Q6ZUF6</accession>
<organism>
    <name type="scientific">Homo sapiens</name>
    <name type="common">Human</name>
    <dbReference type="NCBI Taxonomy" id="9606"/>
    <lineage>
        <taxon>Eukaryota</taxon>
        <taxon>Metazoa</taxon>
        <taxon>Chordata</taxon>
        <taxon>Craniata</taxon>
        <taxon>Vertebrata</taxon>
        <taxon>Euteleostomi</taxon>
        <taxon>Mammalia</taxon>
        <taxon>Eutheria</taxon>
        <taxon>Euarchontoglires</taxon>
        <taxon>Primates</taxon>
        <taxon>Haplorrhini</taxon>
        <taxon>Catarrhini</taxon>
        <taxon>Hominidae</taxon>
        <taxon>Homo</taxon>
    </lineage>
</organism>
<feature type="chain" id="PRO_0000348463" description="Putative uncharacterized protein encoded by LINC00336">
    <location>
        <begin position="1"/>
        <end position="198"/>
    </location>
</feature>
<feature type="region of interest" description="Disordered" evidence="1">
    <location>
        <begin position="40"/>
        <end position="111"/>
    </location>
</feature>
<feature type="compositionally biased region" description="Low complexity" evidence="1">
    <location>
        <begin position="60"/>
        <end position="74"/>
    </location>
</feature>
<feature type="sequence variant" id="VAR_046183" description="In dbSNP:rs7759154.">
    <original>S</original>
    <variation>R</variation>
    <location>
        <position position="13"/>
    </location>
</feature>
<feature type="sequence variant" id="VAR_046184" description="In dbSNP:rs210162.">
    <original>L</original>
    <variation>P</variation>
    <location>
        <position position="73"/>
    </location>
</feature>
<feature type="sequence variant" id="VAR_046185" description="In dbSNP:rs9469517.">
    <original>P</original>
    <variation>S</variation>
    <location>
        <position position="84"/>
    </location>
</feature>
<name>NC336_HUMAN</name>
<keyword id="KW-1185">Reference proteome</keyword>
<dbReference type="EMBL" id="AK125740">
    <property type="protein sequence ID" value="BAC86269.1"/>
    <property type="molecule type" value="mRNA"/>
</dbReference>
<dbReference type="BioMuta" id="HGNC:33813"/>
<dbReference type="DMDM" id="74749672"/>
<dbReference type="MassIVE" id="Q6ZUF6"/>
<dbReference type="PeptideAtlas" id="Q6ZUF6"/>
<dbReference type="ProteomicsDB" id="68329"/>
<dbReference type="AGR" id="HGNC:33813"/>
<dbReference type="GeneCards" id="LINC00336"/>
<dbReference type="HGNC" id="HGNC:33813">
    <property type="gene designation" value="LINC00336"/>
</dbReference>
<dbReference type="neXtProt" id="NX_Q6ZUF6"/>
<dbReference type="InParanoid" id="Q6ZUF6"/>
<dbReference type="PAN-GO" id="Q6ZUF6">
    <property type="GO annotations" value="0 GO annotations based on evolutionary models"/>
</dbReference>
<dbReference type="Pharos" id="Q6ZUF6">
    <property type="development level" value="Tdark"/>
</dbReference>
<dbReference type="PRO" id="PR:Q6ZUF6"/>
<dbReference type="Proteomes" id="UP000005640">
    <property type="component" value="Unplaced"/>
</dbReference>
<dbReference type="RNAct" id="Q6ZUF6">
    <property type="molecule type" value="protein"/>
</dbReference>
<dbReference type="PRINTS" id="PR02045">
    <property type="entry name" value="F138DOMAIN"/>
</dbReference>
<gene>
    <name type="primary">LINC00336</name>
    <name type="synonym">C6orf227</name>
    <name type="synonym">NCRNA00336</name>
</gene>
<protein>
    <recommendedName>
        <fullName>Putative uncharacterized protein encoded by LINC00336</fullName>
    </recommendedName>
</protein>
<comment type="caution">
    <text evidence="2">Product of a dubious CDS prediction. May be a non-coding RNA.</text>
</comment>